<sequence length="492" mass="57004">MNMPLLLLIAIVVVSLSHGNGEQTDLTRETFPAGFVFGTASSAYQVEGNALQYGRGPCIWDTFLMQPGVTPDNSTANVTVDEYHRYMDDVDNMVRVGFDAYRFSISWSRIFPSGLGKINKDGVDYYHRLIDYMLANNIIPYVVLYHYDLPQVLHDQYKGWLHPRIVRDFVRFADFCFKTYGHKVKNWFTINEPRMMANHGYGDGFFPPGRCTGCQPGGNSATEPYIAAHNLLLSHAAAVRTYRDKYQAIQKGKIGILLDFVWYEPLTDKEEDHAAAHRAREFTLGWYLHPITYGHYPETMQNAVKERLPNFTREQSEMIKGSADYIAINHYTTYYVSHHVNKTSISYLNDWDVKISYERNGVPIGKQAYSNWLYVVPWGIYKAVMHVKEKYKDPIIIIGENGIDQPGNETLPGALYDFFRIQYFDQYLHELKRAIKDGARVTGYFAWSLLDNFEWRLGFTSKFGIVYVDRSTFTRYPKDSTRWFRKMIKSEV</sequence>
<gene>
    <name type="primary">BGLU38</name>
    <name type="ordered locus">Os12g0420100</name>
    <name type="ordered locus">LOC_Os12g23170</name>
    <name type="ORF">OsJ_35886</name>
</gene>
<proteinExistence type="evidence at transcript level"/>
<accession>Q2QSR8</accession>
<accession>A0A0P0Y9W2</accession>
<keyword id="KW-1015">Disulfide bond</keyword>
<keyword id="KW-0325">Glycoprotein</keyword>
<keyword id="KW-0326">Glycosidase</keyword>
<keyword id="KW-0378">Hydrolase</keyword>
<keyword id="KW-1185">Reference proteome</keyword>
<keyword id="KW-0732">Signal</keyword>
<protein>
    <recommendedName>
        <fullName>Beta-glucosidase 38</fullName>
        <shortName>Os12bglu38</shortName>
        <ecNumber evidence="2">3.2.1.21</ecNumber>
    </recommendedName>
</protein>
<dbReference type="EC" id="3.2.1.21" evidence="2"/>
<dbReference type="EMBL" id="DP000011">
    <property type="protein sequence ID" value="ABA97621.2"/>
    <property type="molecule type" value="Genomic_DNA"/>
</dbReference>
<dbReference type="EMBL" id="AP008218">
    <property type="protein sequence ID" value="BAF29675.1"/>
    <property type="molecule type" value="Genomic_DNA"/>
</dbReference>
<dbReference type="EMBL" id="AP014968">
    <property type="protein sequence ID" value="BAT16894.1"/>
    <property type="molecule type" value="Genomic_DNA"/>
</dbReference>
<dbReference type="EMBL" id="CM000149">
    <property type="protein sequence ID" value="EEE53109.1"/>
    <property type="molecule type" value="Genomic_DNA"/>
</dbReference>
<dbReference type="EMBL" id="AK071058">
    <property type="protein sequence ID" value="BAG92285.1"/>
    <property type="molecule type" value="mRNA"/>
</dbReference>
<dbReference type="RefSeq" id="XP_015620634.1">
    <property type="nucleotide sequence ID" value="XM_015765148.1"/>
</dbReference>
<dbReference type="SMR" id="Q2QSR8"/>
<dbReference type="FunCoup" id="Q2QSR8">
    <property type="interactions" value="413"/>
</dbReference>
<dbReference type="STRING" id="39947.Q2QSR8"/>
<dbReference type="CAZy" id="GH1">
    <property type="family name" value="Glycoside Hydrolase Family 1"/>
</dbReference>
<dbReference type="GlyCosmos" id="Q2QSR8">
    <property type="glycosylation" value="5 sites, No reported glycans"/>
</dbReference>
<dbReference type="PaxDb" id="39947-Q2QSR8"/>
<dbReference type="EnsemblPlants" id="Os12t0420100-01">
    <property type="protein sequence ID" value="Os12t0420100-01"/>
    <property type="gene ID" value="Os12g0420100"/>
</dbReference>
<dbReference type="Gramene" id="Os12t0420100-01">
    <property type="protein sequence ID" value="Os12t0420100-01"/>
    <property type="gene ID" value="Os12g0420100"/>
</dbReference>
<dbReference type="KEGG" id="dosa:Os12g0420100"/>
<dbReference type="eggNOG" id="KOG0626">
    <property type="taxonomic scope" value="Eukaryota"/>
</dbReference>
<dbReference type="HOGENOM" id="CLU_001859_1_0_1"/>
<dbReference type="InParanoid" id="Q2QSR8"/>
<dbReference type="OMA" id="WFRKMIK"/>
<dbReference type="OrthoDB" id="65569at2759"/>
<dbReference type="Proteomes" id="UP000000763">
    <property type="component" value="Chromosome 12"/>
</dbReference>
<dbReference type="Proteomes" id="UP000007752">
    <property type="component" value="Chromosome 12"/>
</dbReference>
<dbReference type="Proteomes" id="UP000059680">
    <property type="component" value="Chromosome 12"/>
</dbReference>
<dbReference type="GO" id="GO:0033907">
    <property type="term" value="F:beta-D-fucosidase activity"/>
    <property type="evidence" value="ECO:0007669"/>
    <property type="project" value="UniProtKB-ARBA"/>
</dbReference>
<dbReference type="GO" id="GO:0004565">
    <property type="term" value="F:beta-galactosidase activity"/>
    <property type="evidence" value="ECO:0007669"/>
    <property type="project" value="UniProtKB-ARBA"/>
</dbReference>
<dbReference type="GO" id="GO:0008422">
    <property type="term" value="F:beta-glucosidase activity"/>
    <property type="evidence" value="ECO:0000318"/>
    <property type="project" value="GO_Central"/>
</dbReference>
<dbReference type="GO" id="GO:0005975">
    <property type="term" value="P:carbohydrate metabolic process"/>
    <property type="evidence" value="ECO:0007669"/>
    <property type="project" value="InterPro"/>
</dbReference>
<dbReference type="FunFam" id="3.20.20.80:FF:000041">
    <property type="entry name" value="Beta-glucosidase 7"/>
    <property type="match status" value="1"/>
</dbReference>
<dbReference type="Gene3D" id="3.20.20.80">
    <property type="entry name" value="Glycosidases"/>
    <property type="match status" value="1"/>
</dbReference>
<dbReference type="InterPro" id="IPR001360">
    <property type="entry name" value="Glyco_hydro_1"/>
</dbReference>
<dbReference type="InterPro" id="IPR017853">
    <property type="entry name" value="Glycoside_hydrolase_SF"/>
</dbReference>
<dbReference type="PANTHER" id="PTHR10353:SF56">
    <property type="entry name" value="BETA-GLUCOSIDASE 38"/>
    <property type="match status" value="1"/>
</dbReference>
<dbReference type="PANTHER" id="PTHR10353">
    <property type="entry name" value="GLYCOSYL HYDROLASE"/>
    <property type="match status" value="1"/>
</dbReference>
<dbReference type="Pfam" id="PF00232">
    <property type="entry name" value="Glyco_hydro_1"/>
    <property type="match status" value="1"/>
</dbReference>
<dbReference type="PRINTS" id="PR00131">
    <property type="entry name" value="GLHYDRLASE1"/>
</dbReference>
<dbReference type="SUPFAM" id="SSF51445">
    <property type="entry name" value="(Trans)glycosidases"/>
    <property type="match status" value="1"/>
</dbReference>
<feature type="signal peptide" evidence="5">
    <location>
        <begin position="1"/>
        <end position="21"/>
    </location>
</feature>
<feature type="chain" id="PRO_0000390353" description="Beta-glucosidase 38">
    <location>
        <begin position="22"/>
        <end position="492"/>
    </location>
</feature>
<feature type="active site" description="Proton donor" evidence="3">
    <location>
        <position position="192"/>
    </location>
</feature>
<feature type="active site" description="Nucleophile" evidence="3">
    <location>
        <position position="400"/>
    </location>
</feature>
<feature type="binding site" evidence="3">
    <location>
        <position position="45"/>
    </location>
    <ligand>
        <name>a beta-D-glucoside</name>
        <dbReference type="ChEBI" id="CHEBI:22798"/>
    </ligand>
</feature>
<feature type="binding site" evidence="3">
    <location>
        <position position="146"/>
    </location>
    <ligand>
        <name>a beta-D-glucoside</name>
        <dbReference type="ChEBI" id="CHEBI:22798"/>
    </ligand>
</feature>
<feature type="binding site" evidence="3">
    <location>
        <begin position="191"/>
        <end position="192"/>
    </location>
    <ligand>
        <name>a beta-D-glucoside</name>
        <dbReference type="ChEBI" id="CHEBI:22798"/>
    </ligand>
</feature>
<feature type="binding site" evidence="3">
    <location>
        <position position="331"/>
    </location>
    <ligand>
        <name>a beta-D-glucoside</name>
        <dbReference type="ChEBI" id="CHEBI:22798"/>
    </ligand>
</feature>
<feature type="binding site" evidence="4">
    <location>
        <position position="400"/>
    </location>
    <ligand>
        <name>a beta-D-glucoside</name>
        <dbReference type="ChEBI" id="CHEBI:22798"/>
    </ligand>
</feature>
<feature type="binding site" evidence="3">
    <location>
        <position position="447"/>
    </location>
    <ligand>
        <name>a beta-D-glucoside</name>
        <dbReference type="ChEBI" id="CHEBI:22798"/>
    </ligand>
</feature>
<feature type="binding site" evidence="3">
    <location>
        <begin position="454"/>
        <end position="455"/>
    </location>
    <ligand>
        <name>a beta-D-glucoside</name>
        <dbReference type="ChEBI" id="CHEBI:22798"/>
    </ligand>
</feature>
<feature type="binding site" evidence="1">
    <location>
        <position position="463"/>
    </location>
    <ligand>
        <name>a beta-D-glucoside</name>
        <dbReference type="ChEBI" id="CHEBI:22798"/>
    </ligand>
</feature>
<feature type="glycosylation site" description="N-linked (GlcNAc...) asparagine" evidence="6">
    <location>
        <position position="73"/>
    </location>
</feature>
<feature type="glycosylation site" description="N-linked (GlcNAc...) asparagine" evidence="6">
    <location>
        <position position="77"/>
    </location>
</feature>
<feature type="glycosylation site" description="N-linked (GlcNAc...) asparagine" evidence="6">
    <location>
        <position position="310"/>
    </location>
</feature>
<feature type="glycosylation site" description="N-linked (GlcNAc...) asparagine" evidence="6">
    <location>
        <position position="341"/>
    </location>
</feature>
<feature type="glycosylation site" description="N-linked (GlcNAc...) asparagine" evidence="6">
    <location>
        <position position="408"/>
    </location>
</feature>
<feature type="disulfide bond" evidence="3">
    <location>
        <begin position="211"/>
        <end position="214"/>
    </location>
</feature>
<evidence type="ECO:0000250" key="1">
    <source>
        <dbReference type="UniProtKB" id="Q1XH05"/>
    </source>
</evidence>
<evidence type="ECO:0000250" key="2">
    <source>
        <dbReference type="UniProtKB" id="Q75I94"/>
    </source>
</evidence>
<evidence type="ECO:0000250" key="3">
    <source>
        <dbReference type="UniProtKB" id="Q7XSK0"/>
    </source>
</evidence>
<evidence type="ECO:0000250" key="4">
    <source>
        <dbReference type="UniProtKB" id="Q9SPP9"/>
    </source>
</evidence>
<evidence type="ECO:0000255" key="5"/>
<evidence type="ECO:0000255" key="6">
    <source>
        <dbReference type="PROSITE-ProRule" id="PRU00498"/>
    </source>
</evidence>
<evidence type="ECO:0000305" key="7"/>
<comment type="catalytic activity">
    <reaction evidence="2">
        <text>Hydrolysis of terminal, non-reducing beta-D-glucosyl residues with release of beta-D-glucose.</text>
        <dbReference type="EC" id="3.2.1.21"/>
    </reaction>
</comment>
<comment type="similarity">
    <text evidence="7">Belongs to the glycosyl hydrolase 1 family.</text>
</comment>
<name>BGL38_ORYSJ</name>
<reference key="1">
    <citation type="journal article" date="2005" name="BMC Biol.">
        <title>The sequence of rice chromosomes 11 and 12, rich in disease resistance genes and recent gene duplications.</title>
        <authorList>
            <consortium name="The rice chromosomes 11 and 12 sequencing consortia"/>
        </authorList>
    </citation>
    <scope>NUCLEOTIDE SEQUENCE [LARGE SCALE GENOMIC DNA]</scope>
    <source>
        <strain>cv. Nipponbare</strain>
    </source>
</reference>
<reference key="2">
    <citation type="journal article" date="2005" name="Nature">
        <title>The map-based sequence of the rice genome.</title>
        <authorList>
            <consortium name="International rice genome sequencing project (IRGSP)"/>
        </authorList>
    </citation>
    <scope>NUCLEOTIDE SEQUENCE [LARGE SCALE GENOMIC DNA]</scope>
    <source>
        <strain>cv. Nipponbare</strain>
    </source>
</reference>
<reference key="3">
    <citation type="journal article" date="2008" name="Nucleic Acids Res.">
        <title>The rice annotation project database (RAP-DB): 2008 update.</title>
        <authorList>
            <consortium name="The rice annotation project (RAP)"/>
        </authorList>
    </citation>
    <scope>GENOME REANNOTATION</scope>
    <source>
        <strain>cv. Nipponbare</strain>
    </source>
</reference>
<reference key="4">
    <citation type="journal article" date="2013" name="Rice">
        <title>Improvement of the Oryza sativa Nipponbare reference genome using next generation sequence and optical map data.</title>
        <authorList>
            <person name="Kawahara Y."/>
            <person name="de la Bastide M."/>
            <person name="Hamilton J.P."/>
            <person name="Kanamori H."/>
            <person name="McCombie W.R."/>
            <person name="Ouyang S."/>
            <person name="Schwartz D.C."/>
            <person name="Tanaka T."/>
            <person name="Wu J."/>
            <person name="Zhou S."/>
            <person name="Childs K.L."/>
            <person name="Davidson R.M."/>
            <person name="Lin H."/>
            <person name="Quesada-Ocampo L."/>
            <person name="Vaillancourt B."/>
            <person name="Sakai H."/>
            <person name="Lee S.S."/>
            <person name="Kim J."/>
            <person name="Numa H."/>
            <person name="Itoh T."/>
            <person name="Buell C.R."/>
            <person name="Matsumoto T."/>
        </authorList>
    </citation>
    <scope>GENOME REANNOTATION</scope>
    <source>
        <strain>cv. Nipponbare</strain>
    </source>
</reference>
<reference key="5">
    <citation type="journal article" date="2005" name="PLoS Biol.">
        <title>The genomes of Oryza sativa: a history of duplications.</title>
        <authorList>
            <person name="Yu J."/>
            <person name="Wang J."/>
            <person name="Lin W."/>
            <person name="Li S."/>
            <person name="Li H."/>
            <person name="Zhou J."/>
            <person name="Ni P."/>
            <person name="Dong W."/>
            <person name="Hu S."/>
            <person name="Zeng C."/>
            <person name="Zhang J."/>
            <person name="Zhang Y."/>
            <person name="Li R."/>
            <person name="Xu Z."/>
            <person name="Li S."/>
            <person name="Li X."/>
            <person name="Zheng H."/>
            <person name="Cong L."/>
            <person name="Lin L."/>
            <person name="Yin J."/>
            <person name="Geng J."/>
            <person name="Li G."/>
            <person name="Shi J."/>
            <person name="Liu J."/>
            <person name="Lv H."/>
            <person name="Li J."/>
            <person name="Wang J."/>
            <person name="Deng Y."/>
            <person name="Ran L."/>
            <person name="Shi X."/>
            <person name="Wang X."/>
            <person name="Wu Q."/>
            <person name="Li C."/>
            <person name="Ren X."/>
            <person name="Wang J."/>
            <person name="Wang X."/>
            <person name="Li D."/>
            <person name="Liu D."/>
            <person name="Zhang X."/>
            <person name="Ji Z."/>
            <person name="Zhao W."/>
            <person name="Sun Y."/>
            <person name="Zhang Z."/>
            <person name="Bao J."/>
            <person name="Han Y."/>
            <person name="Dong L."/>
            <person name="Ji J."/>
            <person name="Chen P."/>
            <person name="Wu S."/>
            <person name="Liu J."/>
            <person name="Xiao Y."/>
            <person name="Bu D."/>
            <person name="Tan J."/>
            <person name="Yang L."/>
            <person name="Ye C."/>
            <person name="Zhang J."/>
            <person name="Xu J."/>
            <person name="Zhou Y."/>
            <person name="Yu Y."/>
            <person name="Zhang B."/>
            <person name="Zhuang S."/>
            <person name="Wei H."/>
            <person name="Liu B."/>
            <person name="Lei M."/>
            <person name="Yu H."/>
            <person name="Li Y."/>
            <person name="Xu H."/>
            <person name="Wei S."/>
            <person name="He X."/>
            <person name="Fang L."/>
            <person name="Zhang Z."/>
            <person name="Zhang Y."/>
            <person name="Huang X."/>
            <person name="Su Z."/>
            <person name="Tong W."/>
            <person name="Li J."/>
            <person name="Tong Z."/>
            <person name="Li S."/>
            <person name="Ye J."/>
            <person name="Wang L."/>
            <person name="Fang L."/>
            <person name="Lei T."/>
            <person name="Chen C.-S."/>
            <person name="Chen H.-C."/>
            <person name="Xu Z."/>
            <person name="Li H."/>
            <person name="Huang H."/>
            <person name="Zhang F."/>
            <person name="Xu H."/>
            <person name="Li N."/>
            <person name="Zhao C."/>
            <person name="Li S."/>
            <person name="Dong L."/>
            <person name="Huang Y."/>
            <person name="Li L."/>
            <person name="Xi Y."/>
            <person name="Qi Q."/>
            <person name="Li W."/>
            <person name="Zhang B."/>
            <person name="Hu W."/>
            <person name="Zhang Y."/>
            <person name="Tian X."/>
            <person name="Jiao Y."/>
            <person name="Liang X."/>
            <person name="Jin J."/>
            <person name="Gao L."/>
            <person name="Zheng W."/>
            <person name="Hao B."/>
            <person name="Liu S.-M."/>
            <person name="Wang W."/>
            <person name="Yuan L."/>
            <person name="Cao M."/>
            <person name="McDermott J."/>
            <person name="Samudrala R."/>
            <person name="Wang J."/>
            <person name="Wong G.K.-S."/>
            <person name="Yang H."/>
        </authorList>
    </citation>
    <scope>NUCLEOTIDE SEQUENCE [LARGE SCALE GENOMIC DNA]</scope>
    <source>
        <strain>cv. Nipponbare</strain>
    </source>
</reference>
<reference key="6">
    <citation type="journal article" date="2003" name="Science">
        <title>Collection, mapping, and annotation of over 28,000 cDNA clones from japonica rice.</title>
        <authorList>
            <consortium name="The rice full-length cDNA consortium"/>
        </authorList>
    </citation>
    <scope>NUCLEOTIDE SEQUENCE [LARGE SCALE MRNA]</scope>
    <source>
        <strain>cv. Nipponbare</strain>
    </source>
</reference>
<reference key="7">
    <citation type="journal article" date="2006" name="BMC Plant Biol.">
        <title>Analysis of rice glycosyl hydrolase family 1 and expression of Os4bglu12 beta-glucosidase.</title>
        <authorList>
            <person name="Opassiri R."/>
            <person name="Pomthong B."/>
            <person name="Onkoksoong T."/>
            <person name="Akiyama T."/>
            <person name="Esen A."/>
            <person name="Ketudat Cairns J.R."/>
        </authorList>
    </citation>
    <scope>GENE FAMILY</scope>
    <scope>NOMENCLATURE</scope>
</reference>
<organism>
    <name type="scientific">Oryza sativa subsp. japonica</name>
    <name type="common">Rice</name>
    <dbReference type="NCBI Taxonomy" id="39947"/>
    <lineage>
        <taxon>Eukaryota</taxon>
        <taxon>Viridiplantae</taxon>
        <taxon>Streptophyta</taxon>
        <taxon>Embryophyta</taxon>
        <taxon>Tracheophyta</taxon>
        <taxon>Spermatophyta</taxon>
        <taxon>Magnoliopsida</taxon>
        <taxon>Liliopsida</taxon>
        <taxon>Poales</taxon>
        <taxon>Poaceae</taxon>
        <taxon>BOP clade</taxon>
        <taxon>Oryzoideae</taxon>
        <taxon>Oryzeae</taxon>
        <taxon>Oryzinae</taxon>
        <taxon>Oryza</taxon>
        <taxon>Oryza sativa</taxon>
    </lineage>
</organism>